<proteinExistence type="inferred from homology"/>
<evidence type="ECO:0000255" key="1">
    <source>
        <dbReference type="HAMAP-Rule" id="MF_00040"/>
    </source>
</evidence>
<keyword id="KW-0963">Cytoplasm</keyword>
<keyword id="KW-0648">Protein biosynthesis</keyword>
<name>RRF_CLASE</name>
<accession>B0REP7</accession>
<protein>
    <recommendedName>
        <fullName evidence="1">Ribosome-recycling factor</fullName>
        <shortName evidence="1">RRF</shortName>
    </recommendedName>
    <alternativeName>
        <fullName evidence="1">Ribosome-releasing factor</fullName>
    </alternativeName>
</protein>
<gene>
    <name evidence="1" type="primary">frr</name>
    <name type="ordered locus">CMS0774</name>
</gene>
<reference key="1">
    <citation type="journal article" date="2008" name="J. Bacteriol.">
        <title>Genome of the actinomycete plant pathogen Clavibacter michiganensis subsp. sepedonicus suggests recent niche adaptation.</title>
        <authorList>
            <person name="Bentley S.D."/>
            <person name="Corton C."/>
            <person name="Brown S.E."/>
            <person name="Barron A."/>
            <person name="Clark L."/>
            <person name="Doggett J."/>
            <person name="Harris B."/>
            <person name="Ormond D."/>
            <person name="Quail M.A."/>
            <person name="May G."/>
            <person name="Francis D."/>
            <person name="Knudson D."/>
            <person name="Parkhill J."/>
            <person name="Ishimaru C.A."/>
        </authorList>
    </citation>
    <scope>NUCLEOTIDE SEQUENCE [LARGE SCALE GENOMIC DNA]</scope>
    <source>
        <strain>ATCC 33113 / DSM 20744 / JCM 9667 / LMG 2889 / ICMP 2535 / C-1</strain>
    </source>
</reference>
<sequence length="185" mass="20641">MTVAEVLADARDRMGKAVEAVKEDFGSVRTGRANPALFQKVMVEYYGSPTPLGQLASMNNPEARTLIVTPYDKTALKEIEKALVNVPNLSATVGNDGEMVRFTLPELTEDRRKEFVKIVRGKAEEGRVSVRNIRRRSKDELDALKGEVGDDEVARVEKELEALTKTHTDQVDDALKRKETELLEV</sequence>
<comment type="function">
    <text evidence="1">Responsible for the release of ribosomes from messenger RNA at the termination of protein biosynthesis. May increase the efficiency of translation by recycling ribosomes from one round of translation to another.</text>
</comment>
<comment type="subcellular location">
    <subcellularLocation>
        <location evidence="1">Cytoplasm</location>
    </subcellularLocation>
</comment>
<comment type="similarity">
    <text evidence="1">Belongs to the RRF family.</text>
</comment>
<feature type="chain" id="PRO_0000341005" description="Ribosome-recycling factor">
    <location>
        <begin position="1"/>
        <end position="185"/>
    </location>
</feature>
<organism>
    <name type="scientific">Clavibacter sepedonicus</name>
    <name type="common">Clavibacter michiganensis subsp. sepedonicus</name>
    <dbReference type="NCBI Taxonomy" id="31964"/>
    <lineage>
        <taxon>Bacteria</taxon>
        <taxon>Bacillati</taxon>
        <taxon>Actinomycetota</taxon>
        <taxon>Actinomycetes</taxon>
        <taxon>Micrococcales</taxon>
        <taxon>Microbacteriaceae</taxon>
        <taxon>Clavibacter</taxon>
    </lineage>
</organism>
<dbReference type="EMBL" id="AM849034">
    <property type="protein sequence ID" value="CAQ00894.1"/>
    <property type="molecule type" value="Genomic_DNA"/>
</dbReference>
<dbReference type="SMR" id="B0REP7"/>
<dbReference type="STRING" id="31964.CMS0774"/>
<dbReference type="KEGG" id="cms:CMS0774"/>
<dbReference type="eggNOG" id="COG0233">
    <property type="taxonomic scope" value="Bacteria"/>
</dbReference>
<dbReference type="HOGENOM" id="CLU_073981_2_0_11"/>
<dbReference type="OrthoDB" id="9804006at2"/>
<dbReference type="Proteomes" id="UP000001318">
    <property type="component" value="Chromosome"/>
</dbReference>
<dbReference type="GO" id="GO:0005737">
    <property type="term" value="C:cytoplasm"/>
    <property type="evidence" value="ECO:0007669"/>
    <property type="project" value="UniProtKB-SubCell"/>
</dbReference>
<dbReference type="GO" id="GO:0043023">
    <property type="term" value="F:ribosomal large subunit binding"/>
    <property type="evidence" value="ECO:0007669"/>
    <property type="project" value="TreeGrafter"/>
</dbReference>
<dbReference type="GO" id="GO:0006415">
    <property type="term" value="P:translational termination"/>
    <property type="evidence" value="ECO:0007669"/>
    <property type="project" value="UniProtKB-UniRule"/>
</dbReference>
<dbReference type="CDD" id="cd00520">
    <property type="entry name" value="RRF"/>
    <property type="match status" value="1"/>
</dbReference>
<dbReference type="FunFam" id="1.10.132.20:FF:000001">
    <property type="entry name" value="Ribosome-recycling factor"/>
    <property type="match status" value="1"/>
</dbReference>
<dbReference type="FunFam" id="3.30.1360.40:FF:000001">
    <property type="entry name" value="Ribosome-recycling factor"/>
    <property type="match status" value="1"/>
</dbReference>
<dbReference type="Gene3D" id="3.30.1360.40">
    <property type="match status" value="1"/>
</dbReference>
<dbReference type="Gene3D" id="1.10.132.20">
    <property type="entry name" value="Ribosome-recycling factor"/>
    <property type="match status" value="1"/>
</dbReference>
<dbReference type="HAMAP" id="MF_00040">
    <property type="entry name" value="RRF"/>
    <property type="match status" value="1"/>
</dbReference>
<dbReference type="InterPro" id="IPR002661">
    <property type="entry name" value="Ribosome_recyc_fac"/>
</dbReference>
<dbReference type="InterPro" id="IPR023584">
    <property type="entry name" value="Ribosome_recyc_fac_dom"/>
</dbReference>
<dbReference type="InterPro" id="IPR036191">
    <property type="entry name" value="RRF_sf"/>
</dbReference>
<dbReference type="NCBIfam" id="TIGR00496">
    <property type="entry name" value="frr"/>
    <property type="match status" value="1"/>
</dbReference>
<dbReference type="PANTHER" id="PTHR20982:SF3">
    <property type="entry name" value="MITOCHONDRIAL RIBOSOME RECYCLING FACTOR PSEUDO 1"/>
    <property type="match status" value="1"/>
</dbReference>
<dbReference type="PANTHER" id="PTHR20982">
    <property type="entry name" value="RIBOSOME RECYCLING FACTOR"/>
    <property type="match status" value="1"/>
</dbReference>
<dbReference type="Pfam" id="PF01765">
    <property type="entry name" value="RRF"/>
    <property type="match status" value="1"/>
</dbReference>
<dbReference type="SUPFAM" id="SSF55194">
    <property type="entry name" value="Ribosome recycling factor, RRF"/>
    <property type="match status" value="1"/>
</dbReference>